<accession>C5W452</accession>
<accession>C6EGU3</accession>
<accession>C6VBK5</accession>
<proteinExistence type="inferred from homology"/>
<protein>
    <recommendedName>
        <fullName evidence="1">UPF0757 protein YmgG</fullName>
    </recommendedName>
</protein>
<gene>
    <name evidence="1" type="primary">ymgG</name>
    <name type="ordered locus">ECBD_2450</name>
    <name type="ordered locus">ECD_01147</name>
    <name type="ordered locus">B21_01156</name>
</gene>
<reference key="1">
    <citation type="submission" date="2009-06" db="EMBL/GenBank/DDBJ databases">
        <title>Sequencing and gene expression analysis of Escherichia coli BL21.</title>
        <authorList>
            <person name="Leparc G."/>
            <person name="Striedner G."/>
            <person name="Bayer K."/>
            <person name="Kreil D."/>
            <person name="Krempl P.M."/>
        </authorList>
    </citation>
    <scope>NUCLEOTIDE SEQUENCE [LARGE SCALE GENOMIC DNA]</scope>
    <source>
        <strain>B / BL21-DE3</strain>
    </source>
</reference>
<reference key="2">
    <citation type="submission" date="2009-07" db="EMBL/GenBank/DDBJ databases">
        <title>Complete sequence of Escherichia coli BL21(DE3).</title>
        <authorList>
            <person name="Lucas S."/>
            <person name="Copeland A."/>
            <person name="Lapidus A."/>
            <person name="Glavina del Rio T."/>
            <person name="Dalin E."/>
            <person name="Tice H."/>
            <person name="Bruce D."/>
            <person name="Goodwin L."/>
            <person name="Pitluck S."/>
            <person name="LaButti K.M."/>
            <person name="Clum A."/>
            <person name="Larimer F."/>
            <person name="Land M."/>
            <person name="Hauser L."/>
            <person name="Kyrpides N."/>
            <person name="Anderson I."/>
            <person name="Sorek R."/>
            <person name="Rubin E."/>
        </authorList>
    </citation>
    <scope>NUCLEOTIDE SEQUENCE [LARGE SCALE GENOMIC DNA]</scope>
    <source>
        <strain>B / BL21-DE3</strain>
    </source>
</reference>
<reference key="3">
    <citation type="journal article" date="2009" name="J. Mol. Biol.">
        <title>Genome sequences of Escherichia coli B strains REL606 and BL21(DE3).</title>
        <authorList>
            <person name="Jeong H."/>
            <person name="Barbe V."/>
            <person name="Lee C.H."/>
            <person name="Vallenet D."/>
            <person name="Yu D.S."/>
            <person name="Choi S.H."/>
            <person name="Couloux A."/>
            <person name="Lee S.W."/>
            <person name="Yoon S.H."/>
            <person name="Cattolico L."/>
            <person name="Hur C.G."/>
            <person name="Park H.S."/>
            <person name="Segurens B."/>
            <person name="Kim S.C."/>
            <person name="Oh T.K."/>
            <person name="Lenski R.E."/>
            <person name="Studier F.W."/>
            <person name="Daegelen P."/>
            <person name="Kim J.F."/>
        </authorList>
    </citation>
    <scope>NUCLEOTIDE SEQUENCE [LARGE SCALE GENOMIC DNA]</scope>
    <source>
        <strain>B / BL21-DE3</strain>
    </source>
</reference>
<comment type="similarity">
    <text evidence="1">Belongs to the UPF0757 family.</text>
</comment>
<comment type="sequence caution" evidence="2">
    <conflict type="erroneous initiation">
        <sequence resource="EMBL-CDS" id="ACT29474"/>
    </conflict>
    <text>Truncated N-terminus.</text>
</comment>
<comment type="sequence caution" evidence="2">
    <conflict type="erroneous initiation">
        <sequence resource="EMBL-CDS" id="ACT43040"/>
    </conflict>
    <text>Truncated N-terminus.</text>
</comment>
<comment type="sequence caution" evidence="2">
    <conflict type="erroneous initiation">
        <sequence resource="EMBL-CDS" id="CAQ31673"/>
    </conflict>
    <text>Truncated N-terminus.</text>
</comment>
<organism>
    <name type="scientific">Escherichia coli (strain B / BL21-DE3)</name>
    <dbReference type="NCBI Taxonomy" id="469008"/>
    <lineage>
        <taxon>Bacteria</taxon>
        <taxon>Pseudomonadati</taxon>
        <taxon>Pseudomonadota</taxon>
        <taxon>Gammaproteobacteria</taxon>
        <taxon>Enterobacterales</taxon>
        <taxon>Enterobacteriaceae</taxon>
        <taxon>Escherichia</taxon>
    </lineage>
</organism>
<feature type="chain" id="PRO_0000388948" description="UPF0757 protein YmgG">
    <location>
        <begin position="1"/>
        <end position="114"/>
    </location>
</feature>
<name>YMGG_ECOBD</name>
<sequence length="114" mass="10807">MKKKILAFGLISALFCSTPAMADMNRTTKGALLGAGVGLLTGNGVNGVLKGAAVGAGVGAVTEKGRDGKNARKGAKVGAAVGAVTGVLTGNGLEGAIKGAVIGGTGGAILGKMK</sequence>
<evidence type="ECO:0000255" key="1">
    <source>
        <dbReference type="HAMAP-Rule" id="MF_01455"/>
    </source>
</evidence>
<evidence type="ECO:0000305" key="2"/>
<dbReference type="EMBL" id="AM946981">
    <property type="protein sequence ID" value="CAQ31673.1"/>
    <property type="status" value="ALT_INIT"/>
    <property type="molecule type" value="Genomic_DNA"/>
</dbReference>
<dbReference type="EMBL" id="CP001665">
    <property type="protein sequence ID" value="ACT29474.1"/>
    <property type="status" value="ALT_INIT"/>
    <property type="molecule type" value="Genomic_DNA"/>
</dbReference>
<dbReference type="EMBL" id="CP001509">
    <property type="protein sequence ID" value="ACT43040.1"/>
    <property type="status" value="ALT_INIT"/>
    <property type="molecule type" value="Genomic_DNA"/>
</dbReference>
<dbReference type="RefSeq" id="WP_000726974.1">
    <property type="nucleotide sequence ID" value="NZ_JADXDS010000008.1"/>
</dbReference>
<dbReference type="KEGG" id="ebd:ECBD_2450"/>
<dbReference type="KEGG" id="ebe:B21_01156"/>
<dbReference type="KEGG" id="ebl:ECD_01147"/>
<dbReference type="PATRIC" id="fig|469008.15.peg.1178"/>
<dbReference type="eggNOG" id="ENOG5032XK9">
    <property type="taxonomic scope" value="Bacteria"/>
</dbReference>
<dbReference type="HOGENOM" id="CLU_164687_0_0_6"/>
<dbReference type="HAMAP" id="MF_01455">
    <property type="entry name" value="UPF0757"/>
    <property type="match status" value="1"/>
</dbReference>
<dbReference type="InterPro" id="IPR025693">
    <property type="entry name" value="Gly-zipper_OmpA-like_dom"/>
</dbReference>
<dbReference type="InterPro" id="IPR027367">
    <property type="entry name" value="Gly-zipper_YMGG"/>
</dbReference>
<dbReference type="InterPro" id="IPR022833">
    <property type="entry name" value="UPF0757_YmgG"/>
</dbReference>
<dbReference type="Pfam" id="PF13436">
    <property type="entry name" value="Gly-zipper_OmpA"/>
    <property type="match status" value="1"/>
</dbReference>
<dbReference type="Pfam" id="PF13441">
    <property type="entry name" value="Gly-zipper_YMGG"/>
    <property type="match status" value="1"/>
</dbReference>